<organism evidence="5">
    <name type="scientific">Zymomonas mobilis subsp. mobilis (strain ATCC 10988 / DSM 424 / LMG 404 / NCIMB 8938 / NRRL B-806 / ZM1)</name>
    <dbReference type="NCBI Taxonomy" id="555217"/>
    <lineage>
        <taxon>Bacteria</taxon>
        <taxon>Pseudomonadati</taxon>
        <taxon>Pseudomonadota</taxon>
        <taxon>Alphaproteobacteria</taxon>
        <taxon>Sphingomonadales</taxon>
        <taxon>Zymomonadaceae</taxon>
        <taxon>Zymomonas</taxon>
    </lineage>
</organism>
<dbReference type="EC" id="3.1.-.-" evidence="2"/>
<dbReference type="EMBL" id="CP002850">
    <property type="protein sequence ID" value="AEH62228.1"/>
    <property type="molecule type" value="Genomic_DNA"/>
</dbReference>
<dbReference type="RefSeq" id="WP_012817070.1">
    <property type="nucleotide sequence ID" value="NC_017262.1"/>
</dbReference>
<dbReference type="PDB" id="5GUQ">
    <property type="method" value="X-ray"/>
    <property type="resolution" value="1.70 A"/>
    <property type="chains" value="A/B/C/D=1-148"/>
</dbReference>
<dbReference type="PDB" id="5GUS">
    <property type="method" value="X-ray"/>
    <property type="resolution" value="1.95 A"/>
    <property type="chains" value="A/B=1-148"/>
</dbReference>
<dbReference type="PDB" id="5Y6B">
    <property type="method" value="X-ray"/>
    <property type="resolution" value="2.00 A"/>
    <property type="chains" value="A/B/C/D=1-148"/>
</dbReference>
<dbReference type="PDB" id="5Y6C">
    <property type="method" value="X-ray"/>
    <property type="resolution" value="2.40 A"/>
    <property type="chains" value="A/B=1-148"/>
</dbReference>
<dbReference type="PDBsum" id="5GUQ"/>
<dbReference type="PDBsum" id="5GUS"/>
<dbReference type="PDBsum" id="5Y6B"/>
<dbReference type="PDBsum" id="5Y6C"/>
<dbReference type="SMR" id="A0A0H3G0N3"/>
<dbReference type="GeneID" id="79903928"/>
<dbReference type="KEGG" id="zmm:Zmob_0380"/>
<dbReference type="eggNOG" id="COG4933">
    <property type="taxonomic scope" value="Bacteria"/>
</dbReference>
<dbReference type="HOGENOM" id="CLU_135561_0_0_5"/>
<dbReference type="OrthoDB" id="9797478at2"/>
<dbReference type="Proteomes" id="UP000001494">
    <property type="component" value="Chromosome"/>
</dbReference>
<dbReference type="GO" id="GO:0003677">
    <property type="term" value="F:DNA binding"/>
    <property type="evidence" value="ECO:0007669"/>
    <property type="project" value="UniProtKB-KW"/>
</dbReference>
<dbReference type="GO" id="GO:0004519">
    <property type="term" value="F:endonuclease activity"/>
    <property type="evidence" value="ECO:0007669"/>
    <property type="project" value="UniProtKB-KW"/>
</dbReference>
<dbReference type="GO" id="GO:0004527">
    <property type="term" value="F:exonuclease activity"/>
    <property type="evidence" value="ECO:0007669"/>
    <property type="project" value="UniProtKB-KW"/>
</dbReference>
<dbReference type="GO" id="GO:0003723">
    <property type="term" value="F:RNA binding"/>
    <property type="evidence" value="ECO:0007669"/>
    <property type="project" value="UniProtKB-KW"/>
</dbReference>
<dbReference type="Gene3D" id="2.30.130.30">
    <property type="entry name" value="Hypothetical protein"/>
    <property type="match status" value="1"/>
</dbReference>
<dbReference type="InterPro" id="IPR007374">
    <property type="entry name" value="ASCH_domain"/>
</dbReference>
<dbReference type="InterPro" id="IPR015947">
    <property type="entry name" value="PUA-like_sf"/>
</dbReference>
<dbReference type="Pfam" id="PF04266">
    <property type="entry name" value="ASCH"/>
    <property type="match status" value="1"/>
</dbReference>
<dbReference type="SUPFAM" id="SSF88697">
    <property type="entry name" value="PUA domain-like"/>
    <property type="match status" value="1"/>
</dbReference>
<name>ASCHD_ZYMMA</name>
<keyword id="KW-0002">3D-structure</keyword>
<keyword id="KW-0238">DNA-binding</keyword>
<keyword id="KW-0255">Endonuclease</keyword>
<keyword id="KW-0269">Exonuclease</keyword>
<keyword id="KW-0378">Hydrolase</keyword>
<keyword id="KW-0540">Nuclease</keyword>
<keyword id="KW-0694">RNA-binding</keyword>
<gene>
    <name evidence="4" type="ordered locus">Zmob_0380</name>
</gene>
<accession>A0A0H3G0N3</accession>
<feature type="chain" id="PRO_0000452341" description="ASCH domain-containing ribonuclease">
    <location>
        <begin position="1"/>
        <end position="148"/>
    </location>
</feature>
<feature type="domain" description="ASCH" evidence="1">
    <location>
        <begin position="13"/>
        <end position="70"/>
    </location>
</feature>
<feature type="mutagenesis site" description="Significantly reduced binding to ssRNA and ssDNA, and impaired ribonuclease activity." evidence="2">
    <original>Y</original>
    <variation>F</variation>
    <location>
        <position position="47"/>
    </location>
</feature>
<feature type="mutagenesis site" description="Reduced binding to ssRNA and ssDNA. No effect on ribonuclease activity." evidence="2">
    <original>K</original>
    <variation>E</variation>
    <location>
        <position position="53"/>
    </location>
</feature>
<feature type="mutagenesis site" description="Slightly reduced binding to ssRNA and ssDNA. No effect on ribonuclease activity." evidence="2">
    <original>S</original>
    <variation>A</variation>
    <location>
        <position position="128"/>
    </location>
</feature>
<feature type="helix" evidence="11">
    <location>
        <begin position="4"/>
        <end position="6"/>
    </location>
</feature>
<feature type="strand" evidence="9">
    <location>
        <begin position="9"/>
        <end position="14"/>
    </location>
</feature>
<feature type="helix" evidence="9">
    <location>
        <begin position="16"/>
        <end position="23"/>
    </location>
</feature>
<feature type="strand" evidence="9">
    <location>
        <begin position="29"/>
        <end position="34"/>
    </location>
</feature>
<feature type="strand" evidence="9">
    <location>
        <begin position="43"/>
        <end position="48"/>
    </location>
</feature>
<feature type="turn" evidence="9">
    <location>
        <begin position="50"/>
        <end position="52"/>
    </location>
</feature>
<feature type="strand" evidence="9">
    <location>
        <begin position="54"/>
        <end position="68"/>
    </location>
</feature>
<feature type="helix" evidence="9">
    <location>
        <begin position="69"/>
        <end position="80"/>
    </location>
</feature>
<feature type="helix" evidence="9">
    <location>
        <begin position="84"/>
        <end position="90"/>
    </location>
</feature>
<feature type="turn" evidence="9">
    <location>
        <begin position="91"/>
        <end position="93"/>
    </location>
</feature>
<feature type="strand" evidence="9">
    <location>
        <begin position="95"/>
        <end position="112"/>
    </location>
</feature>
<feature type="helix" evidence="9">
    <location>
        <begin position="113"/>
        <end position="119"/>
    </location>
</feature>
<feature type="strand" evidence="10">
    <location>
        <begin position="127"/>
        <end position="131"/>
    </location>
</feature>
<feature type="helix" evidence="9">
    <location>
        <begin position="134"/>
        <end position="143"/>
    </location>
</feature>
<sequence length="148" mass="17224">MTDIPDRKEAVISLWPEFAKAIVSGKKTVEFRRRIPLPALSARIWIYATRPVKSVIGFAYLEAIVQGDVNTLWSRYGREAFLSEQQYRDYFEGTEKATAFLLRDHQPIRPINLDQLKEIRANFQPPQSLTWLRKEETQKLVSLTSQVE</sequence>
<evidence type="ECO:0000255" key="1"/>
<evidence type="ECO:0000269" key="2">
    <source>
    </source>
</evidence>
<evidence type="ECO:0000303" key="3">
    <source>
    </source>
</evidence>
<evidence type="ECO:0000312" key="4">
    <source>
        <dbReference type="EMBL" id="AEH62228.1"/>
    </source>
</evidence>
<evidence type="ECO:0000312" key="5">
    <source>
        <dbReference type="Proteomes" id="UP000001494"/>
    </source>
</evidence>
<evidence type="ECO:0007744" key="6">
    <source>
        <dbReference type="PDB" id="5GUQ"/>
    </source>
</evidence>
<evidence type="ECO:0007744" key="7">
    <source>
        <dbReference type="PDB" id="5GUS"/>
    </source>
</evidence>
<evidence type="ECO:0007744" key="8">
    <source>
        <dbReference type="PDB" id="5Y6B"/>
    </source>
</evidence>
<evidence type="ECO:0007829" key="9">
    <source>
        <dbReference type="PDB" id="5GUQ"/>
    </source>
</evidence>
<evidence type="ECO:0007829" key="10">
    <source>
        <dbReference type="PDB" id="5GUS"/>
    </source>
</evidence>
<evidence type="ECO:0007829" key="11">
    <source>
        <dbReference type="PDB" id="5Y6B"/>
    </source>
</evidence>
<proteinExistence type="evidence at protein level"/>
<reference evidence="5" key="1">
    <citation type="journal article" date="2011" name="J. Bacteriol.">
        <title>Genome sequence of the ethanol-producing Zymomonas mobilis subsp. mobilis lectotype strain ATCC 10988.</title>
        <authorList>
            <person name="Pappas K.M."/>
            <person name="Kouvelis V.N."/>
            <person name="Saunders E."/>
            <person name="Brettin T.S."/>
            <person name="Bruce D."/>
            <person name="Detter C."/>
            <person name="Balakireva M."/>
            <person name="Han C.S."/>
            <person name="Savvakis G."/>
            <person name="Kyrpides N.C."/>
            <person name="Typas M.A."/>
        </authorList>
    </citation>
    <scope>NUCLEOTIDE SEQUENCE [LARGE SCALE GENOMIC DNA]</scope>
    <source>
        <strain evidence="5">ATCC 10988 / DSM 424 / CCUG 17860 / LMG 404 / NCIMB 8938 / NRRL B-806 / ZM1</strain>
    </source>
</reference>
<reference evidence="6 7 8" key="2">
    <citation type="journal article" date="2017" name="Sci. Rep.">
        <title>Crystal structure of an ASCH protein from Zymomonas mobilis and its ribonuclease activity specific for single-stranded RNA.</title>
        <authorList>
            <person name="Kim B.N."/>
            <person name="Shin M."/>
            <person name="Ha S.C."/>
            <person name="Park S.Y."/>
            <person name="Seo P.W."/>
            <person name="Hofmann A."/>
            <person name="Kim J.S."/>
        </authorList>
    </citation>
    <scope>X-RAY CRYSTALLOGRAPHY (1.70 ANGSTROMS)</scope>
    <scope>FUNCTION</scope>
    <scope>COFACTOR</scope>
    <scope>MUTAGENESIS OF TYR-47; LYS-53 AND SER-128</scope>
</reference>
<protein>
    <recommendedName>
        <fullName evidence="3">ASCH domain-containing ribonuclease</fullName>
        <shortName evidence="3">ZmASCH</shortName>
        <ecNumber evidence="2">3.1.-.-</ecNumber>
    </recommendedName>
</protein>
<comment type="function">
    <text evidence="2">Shows sequence-specific endoribonuclease activity towards single-stranded RNA (ssRNA), with a preference for the bond between pyrimidine and adenine nucleotides. May also have 5'-exonuclease activity.</text>
</comment>
<comment type="cofactor">
    <cofactor evidence="2">
        <name>Mn(2+)</name>
        <dbReference type="ChEBI" id="CHEBI:29035"/>
    </cofactor>
    <cofactor evidence="2">
        <name>Ni(2+)</name>
        <dbReference type="ChEBI" id="CHEBI:49786"/>
    </cofactor>
    <text evidence="2">Active in the presence of Mn(2+) or Ni(2+) ions. No activity detected with Zn(2+) or Co(2+).</text>
</comment>